<feature type="chain" id="PRO_0000410424" description="dITP/XTP pyrophosphatase">
    <location>
        <begin position="1"/>
        <end position="184"/>
    </location>
</feature>
<feature type="active site" description="Proton acceptor" evidence="1">
    <location>
        <position position="62"/>
    </location>
</feature>
<feature type="binding site" evidence="1">
    <location>
        <begin position="5"/>
        <end position="10"/>
    </location>
    <ligand>
        <name>substrate</name>
    </ligand>
</feature>
<feature type="binding site" evidence="1">
    <location>
        <position position="33"/>
    </location>
    <ligand>
        <name>Mg(2+)</name>
        <dbReference type="ChEBI" id="CHEBI:18420"/>
    </ligand>
</feature>
<feature type="binding site" evidence="1">
    <location>
        <position position="62"/>
    </location>
    <ligand>
        <name>Mg(2+)</name>
        <dbReference type="ChEBI" id="CHEBI:18420"/>
    </ligand>
</feature>
<feature type="binding site" evidence="1">
    <location>
        <position position="63"/>
    </location>
    <ligand>
        <name>substrate</name>
    </ligand>
</feature>
<feature type="binding site" evidence="1">
    <location>
        <begin position="136"/>
        <end position="139"/>
    </location>
    <ligand>
        <name>substrate</name>
    </ligand>
</feature>
<feature type="binding site" evidence="1">
    <location>
        <position position="158"/>
    </location>
    <ligand>
        <name>substrate</name>
    </ligand>
</feature>
<feature type="binding site" evidence="1">
    <location>
        <begin position="163"/>
        <end position="164"/>
    </location>
    <ligand>
        <name>substrate</name>
    </ligand>
</feature>
<organism>
    <name type="scientific">Korarchaeum cryptofilum (strain OPF8)</name>
    <dbReference type="NCBI Taxonomy" id="374847"/>
    <lineage>
        <taxon>Archaea</taxon>
        <taxon>Thermoproteota</taxon>
        <taxon>Candidatus Korarchaeia</taxon>
        <taxon>Candidatus Korarchaeales</taxon>
        <taxon>Candidatus Korarchaeaceae</taxon>
        <taxon>Candidatus Korarchaeum</taxon>
    </lineage>
</organism>
<sequence>MIFASSNRHKYEEFRRMLSDLIDLKFLEVDYLEPQGEDTREIVVTSAKWLSNYIREPFFIEDSGLFIEALNGFPGPYSSYVFKKIGNEGVLKLMNGVENRRAFFISVIALSYGRGIEVFEGRVQGTIAREVRGGGWGFDPIFIPNGSNKTYGELGDEKDRFSHRGASCRKLREFLMRFGSDRLP</sequence>
<comment type="function">
    <text evidence="1">Pyrophosphatase that catalyzes the hydrolysis of nucleoside triphosphates to their monophosphate derivatives, with a high preference for the non-canonical purine nucleotides XTP (xanthosine triphosphate), dITP (deoxyinosine triphosphate) and ITP. Seems to function as a house-cleaning enzyme that removes non-canonical purine nucleotides from the nucleotide pool, thus preventing their incorporation into DNA/RNA and avoiding chromosomal lesions.</text>
</comment>
<comment type="catalytic activity">
    <reaction evidence="1">
        <text>XTP + H2O = XMP + diphosphate + H(+)</text>
        <dbReference type="Rhea" id="RHEA:28610"/>
        <dbReference type="ChEBI" id="CHEBI:15377"/>
        <dbReference type="ChEBI" id="CHEBI:15378"/>
        <dbReference type="ChEBI" id="CHEBI:33019"/>
        <dbReference type="ChEBI" id="CHEBI:57464"/>
        <dbReference type="ChEBI" id="CHEBI:61314"/>
        <dbReference type="EC" id="3.6.1.66"/>
    </reaction>
</comment>
<comment type="catalytic activity">
    <reaction evidence="1">
        <text>dITP + H2O = dIMP + diphosphate + H(+)</text>
        <dbReference type="Rhea" id="RHEA:28342"/>
        <dbReference type="ChEBI" id="CHEBI:15377"/>
        <dbReference type="ChEBI" id="CHEBI:15378"/>
        <dbReference type="ChEBI" id="CHEBI:33019"/>
        <dbReference type="ChEBI" id="CHEBI:61194"/>
        <dbReference type="ChEBI" id="CHEBI:61382"/>
        <dbReference type="EC" id="3.6.1.66"/>
    </reaction>
</comment>
<comment type="catalytic activity">
    <reaction evidence="1">
        <text>ITP + H2O = IMP + diphosphate + H(+)</text>
        <dbReference type="Rhea" id="RHEA:29399"/>
        <dbReference type="ChEBI" id="CHEBI:15377"/>
        <dbReference type="ChEBI" id="CHEBI:15378"/>
        <dbReference type="ChEBI" id="CHEBI:33019"/>
        <dbReference type="ChEBI" id="CHEBI:58053"/>
        <dbReference type="ChEBI" id="CHEBI:61402"/>
        <dbReference type="EC" id="3.6.1.66"/>
    </reaction>
</comment>
<comment type="cofactor">
    <cofactor evidence="1">
        <name>Mg(2+)</name>
        <dbReference type="ChEBI" id="CHEBI:18420"/>
    </cofactor>
    <text evidence="1">Binds 1 Mg(2+) ion per subunit.</text>
</comment>
<comment type="subunit">
    <text evidence="1">Homodimer.</text>
</comment>
<comment type="similarity">
    <text evidence="1">Belongs to the HAM1 NTPase family.</text>
</comment>
<reference key="1">
    <citation type="journal article" date="2008" name="Proc. Natl. Acad. Sci. U.S.A.">
        <title>A korarchaeal genome reveals new insights into the evolution of the Archaea.</title>
        <authorList>
            <person name="Elkins J.G."/>
            <person name="Podar M."/>
            <person name="Graham D.E."/>
            <person name="Makarova K.S."/>
            <person name="Wolf Y."/>
            <person name="Randau L."/>
            <person name="Hedlund B.P."/>
            <person name="Brochier-Armanet C."/>
            <person name="Kunin V."/>
            <person name="Anderson I."/>
            <person name="Lapidus A."/>
            <person name="Goltsman E."/>
            <person name="Barry K."/>
            <person name="Koonin E.V."/>
            <person name="Hugenholtz P."/>
            <person name="Kyrpides N."/>
            <person name="Wanner G."/>
            <person name="Richardson P."/>
            <person name="Keller M."/>
            <person name="Stetter K.O."/>
        </authorList>
    </citation>
    <scope>NUCLEOTIDE SEQUENCE [LARGE SCALE GENOMIC DNA]</scope>
    <source>
        <strain>OPF8</strain>
    </source>
</reference>
<name>IXTPA_KORCO</name>
<proteinExistence type="inferred from homology"/>
<keyword id="KW-0378">Hydrolase</keyword>
<keyword id="KW-0460">Magnesium</keyword>
<keyword id="KW-0479">Metal-binding</keyword>
<keyword id="KW-0546">Nucleotide metabolism</keyword>
<keyword id="KW-0547">Nucleotide-binding</keyword>
<keyword id="KW-1185">Reference proteome</keyword>
<evidence type="ECO:0000255" key="1">
    <source>
        <dbReference type="HAMAP-Rule" id="MF_01405"/>
    </source>
</evidence>
<protein>
    <recommendedName>
        <fullName evidence="1">dITP/XTP pyrophosphatase</fullName>
        <ecNumber evidence="1">3.6.1.66</ecNumber>
    </recommendedName>
    <alternativeName>
        <fullName evidence="1">Non-canonical purine NTP pyrophosphatase</fullName>
    </alternativeName>
    <alternativeName>
        <fullName evidence="1">Non-standard purine NTP pyrophosphatase</fullName>
    </alternativeName>
    <alternativeName>
        <fullName evidence="1">Nucleoside-triphosphate diphosphatase</fullName>
    </alternativeName>
    <alternativeName>
        <fullName evidence="1">Nucleoside-triphosphate pyrophosphatase</fullName>
        <shortName evidence="1">NTPase</shortName>
    </alternativeName>
</protein>
<accession>B1L6T7</accession>
<gene>
    <name type="ordered locus">Kcr_1420</name>
</gene>
<dbReference type="EC" id="3.6.1.66" evidence="1"/>
<dbReference type="EMBL" id="CP000968">
    <property type="protein sequence ID" value="ACB08166.1"/>
    <property type="molecule type" value="Genomic_DNA"/>
</dbReference>
<dbReference type="RefSeq" id="WP_012310063.1">
    <property type="nucleotide sequence ID" value="NC_010482.1"/>
</dbReference>
<dbReference type="SMR" id="B1L6T7"/>
<dbReference type="FunCoup" id="B1L6T7">
    <property type="interactions" value="177"/>
</dbReference>
<dbReference type="STRING" id="374847.Kcr_1420"/>
<dbReference type="EnsemblBacteria" id="ACB08166">
    <property type="protein sequence ID" value="ACB08166"/>
    <property type="gene ID" value="Kcr_1420"/>
</dbReference>
<dbReference type="GeneID" id="6094697"/>
<dbReference type="KEGG" id="kcr:Kcr_1420"/>
<dbReference type="eggNOG" id="arCOG04184">
    <property type="taxonomic scope" value="Archaea"/>
</dbReference>
<dbReference type="HOGENOM" id="CLU_082080_1_0_2"/>
<dbReference type="InParanoid" id="B1L6T7"/>
<dbReference type="OrthoDB" id="372108at2157"/>
<dbReference type="PhylomeDB" id="B1L6T7"/>
<dbReference type="Proteomes" id="UP000001686">
    <property type="component" value="Chromosome"/>
</dbReference>
<dbReference type="GO" id="GO:0005737">
    <property type="term" value="C:cytoplasm"/>
    <property type="evidence" value="ECO:0000318"/>
    <property type="project" value="GO_Central"/>
</dbReference>
<dbReference type="GO" id="GO:0035870">
    <property type="term" value="F:dITP diphosphatase activity"/>
    <property type="evidence" value="ECO:0007669"/>
    <property type="project" value="RHEA"/>
</dbReference>
<dbReference type="GO" id="GO:0036220">
    <property type="term" value="F:ITP diphosphatase activity"/>
    <property type="evidence" value="ECO:0007669"/>
    <property type="project" value="UniProtKB-EC"/>
</dbReference>
<dbReference type="GO" id="GO:0046872">
    <property type="term" value="F:metal ion binding"/>
    <property type="evidence" value="ECO:0007669"/>
    <property type="project" value="UniProtKB-KW"/>
</dbReference>
<dbReference type="GO" id="GO:0047429">
    <property type="term" value="F:nucleoside triphosphate diphosphatase activity"/>
    <property type="evidence" value="ECO:0000318"/>
    <property type="project" value="GO_Central"/>
</dbReference>
<dbReference type="GO" id="GO:0000166">
    <property type="term" value="F:nucleotide binding"/>
    <property type="evidence" value="ECO:0007669"/>
    <property type="project" value="UniProtKB-KW"/>
</dbReference>
<dbReference type="GO" id="GO:0017111">
    <property type="term" value="F:ribonucleoside triphosphate phosphatase activity"/>
    <property type="evidence" value="ECO:0007669"/>
    <property type="project" value="InterPro"/>
</dbReference>
<dbReference type="GO" id="GO:0036222">
    <property type="term" value="F:XTP diphosphatase activity"/>
    <property type="evidence" value="ECO:0007669"/>
    <property type="project" value="RHEA"/>
</dbReference>
<dbReference type="GO" id="GO:0009143">
    <property type="term" value="P:nucleoside triphosphate catabolic process"/>
    <property type="evidence" value="ECO:0000318"/>
    <property type="project" value="GO_Central"/>
</dbReference>
<dbReference type="GO" id="GO:0009117">
    <property type="term" value="P:nucleotide metabolic process"/>
    <property type="evidence" value="ECO:0007669"/>
    <property type="project" value="UniProtKB-KW"/>
</dbReference>
<dbReference type="GO" id="GO:0009146">
    <property type="term" value="P:purine nucleoside triphosphate catabolic process"/>
    <property type="evidence" value="ECO:0007669"/>
    <property type="project" value="UniProtKB-UniRule"/>
</dbReference>
<dbReference type="CDD" id="cd00515">
    <property type="entry name" value="HAM1"/>
    <property type="match status" value="1"/>
</dbReference>
<dbReference type="Gene3D" id="3.90.950.10">
    <property type="match status" value="1"/>
</dbReference>
<dbReference type="HAMAP" id="MF_01405">
    <property type="entry name" value="Non_canon_purine_NTPase"/>
    <property type="match status" value="1"/>
</dbReference>
<dbReference type="InterPro" id="IPR020922">
    <property type="entry name" value="dITP/XTP_pyrophosphatase"/>
</dbReference>
<dbReference type="InterPro" id="IPR029001">
    <property type="entry name" value="ITPase-like_fam"/>
</dbReference>
<dbReference type="InterPro" id="IPR002637">
    <property type="entry name" value="RdgB/HAM1"/>
</dbReference>
<dbReference type="NCBIfam" id="TIGR00042">
    <property type="entry name" value="RdgB/HAM1 family non-canonical purine NTP pyrophosphatase"/>
    <property type="match status" value="1"/>
</dbReference>
<dbReference type="PANTHER" id="PTHR11067:SF9">
    <property type="entry name" value="INOSINE TRIPHOSPHATE PYROPHOSPHATASE"/>
    <property type="match status" value="1"/>
</dbReference>
<dbReference type="PANTHER" id="PTHR11067">
    <property type="entry name" value="INOSINE TRIPHOSPHATE PYROPHOSPHATASE/HAM1 PROTEIN"/>
    <property type="match status" value="1"/>
</dbReference>
<dbReference type="Pfam" id="PF01725">
    <property type="entry name" value="Ham1p_like"/>
    <property type="match status" value="1"/>
</dbReference>
<dbReference type="SUPFAM" id="SSF52972">
    <property type="entry name" value="ITPase-like"/>
    <property type="match status" value="1"/>
</dbReference>